<name>END8_ECO27</name>
<gene>
    <name evidence="1" type="primary">nei</name>
    <name type="ordered locus">E2348C_0597</name>
</gene>
<evidence type="ECO:0000255" key="1">
    <source>
        <dbReference type="HAMAP-Rule" id="MF_01253"/>
    </source>
</evidence>
<accession>B7ULJ5</accession>
<reference key="1">
    <citation type="journal article" date="2009" name="J. Bacteriol.">
        <title>Complete genome sequence and comparative genome analysis of enteropathogenic Escherichia coli O127:H6 strain E2348/69.</title>
        <authorList>
            <person name="Iguchi A."/>
            <person name="Thomson N.R."/>
            <person name="Ogura Y."/>
            <person name="Saunders D."/>
            <person name="Ooka T."/>
            <person name="Henderson I.R."/>
            <person name="Harris D."/>
            <person name="Asadulghani M."/>
            <person name="Kurokawa K."/>
            <person name="Dean P."/>
            <person name="Kenny B."/>
            <person name="Quail M.A."/>
            <person name="Thurston S."/>
            <person name="Dougan G."/>
            <person name="Hayashi T."/>
            <person name="Parkhill J."/>
            <person name="Frankel G."/>
        </authorList>
    </citation>
    <scope>NUCLEOTIDE SEQUENCE [LARGE SCALE GENOMIC DNA]</scope>
    <source>
        <strain>E2348/69 / EPEC</strain>
    </source>
</reference>
<sequence>MPEGPEIRRAADNLEAAIKGKPLTDVWFAFPQLKSYQSRLIGQHVTHVETRGKALLTHFSNDLTLYSHNQLYGVWRVVDTGEEPQTTRVLRVKLQTADKTILLYSASDIEMLTPEQLTTHPFLQRVGHDVLDPNLTPEVVKERLLSPRFRNRQFAGLLLDQAFLAGLGNYLRVEILWQVGLTGNHKAKDLNAAQLDALAHALLDIPRLSYATRGQVDENKYHGALFRFKVFHRDGEPCERCGGIIEKTTLSSRPFYWCPGCQH</sequence>
<keyword id="KW-0227">DNA damage</keyword>
<keyword id="KW-0234">DNA repair</keyword>
<keyword id="KW-0238">DNA-binding</keyword>
<keyword id="KW-0326">Glycosidase</keyword>
<keyword id="KW-0378">Hydrolase</keyword>
<keyword id="KW-0456">Lyase</keyword>
<keyword id="KW-0479">Metal-binding</keyword>
<keyword id="KW-0511">Multifunctional enzyme</keyword>
<keyword id="KW-1185">Reference proteome</keyword>
<keyword id="KW-0862">Zinc</keyword>
<keyword id="KW-0863">Zinc-finger</keyword>
<protein>
    <recommendedName>
        <fullName evidence="1">Endonuclease 8</fullName>
    </recommendedName>
    <alternativeName>
        <fullName evidence="1">DNA glycosylase/AP lyase Nei</fullName>
        <ecNumber evidence="1">3.2.2.-</ecNumber>
        <ecNumber evidence="1">4.2.99.18</ecNumber>
    </alternativeName>
    <alternativeName>
        <fullName evidence="1">DNA-(apurinic or apyrimidinic site) lyase Nei</fullName>
    </alternativeName>
    <alternativeName>
        <fullName evidence="1">Endonuclease VIII</fullName>
    </alternativeName>
</protein>
<comment type="function">
    <text evidence="1">Involved in base excision repair of DNA damaged by oxidation or by mutagenic agents. Acts as a DNA glycosylase that recognizes and removes damaged bases. Has a preference for oxidized pyrimidines, such as thymine glycol, 5,6-dihydrouracil and 5,6-dihydrothymine. Has AP (apurinic/apyrimidinic) lyase activity and introduces nicks in the DNA strand. Cleaves the DNA backbone by beta-delta elimination to generate a single-strand break at the site of the removed base with both 3'- and 5'-phosphates.</text>
</comment>
<comment type="catalytic activity">
    <reaction evidence="1">
        <text>2'-deoxyribonucleotide-(2'-deoxyribose 5'-phosphate)-2'-deoxyribonucleotide-DNA = a 3'-end 2'-deoxyribonucleotide-(2,3-dehydro-2,3-deoxyribose 5'-phosphate)-DNA + a 5'-end 5'-phospho-2'-deoxyribonucleoside-DNA + H(+)</text>
        <dbReference type="Rhea" id="RHEA:66592"/>
        <dbReference type="Rhea" id="RHEA-COMP:13180"/>
        <dbReference type="Rhea" id="RHEA-COMP:16897"/>
        <dbReference type="Rhea" id="RHEA-COMP:17067"/>
        <dbReference type="ChEBI" id="CHEBI:15378"/>
        <dbReference type="ChEBI" id="CHEBI:136412"/>
        <dbReference type="ChEBI" id="CHEBI:157695"/>
        <dbReference type="ChEBI" id="CHEBI:167181"/>
        <dbReference type="EC" id="4.2.99.18"/>
    </reaction>
</comment>
<comment type="cofactor">
    <cofactor evidence="1">
        <name>Zn(2+)</name>
        <dbReference type="ChEBI" id="CHEBI:29105"/>
    </cofactor>
    <text evidence="1">Binds 1 zinc ion per subunit.</text>
</comment>
<comment type="similarity">
    <text evidence="1">Belongs to the FPG family.</text>
</comment>
<dbReference type="EC" id="3.2.2.-" evidence="1"/>
<dbReference type="EC" id="4.2.99.18" evidence="1"/>
<dbReference type="EMBL" id="FM180568">
    <property type="protein sequence ID" value="CAS08145.1"/>
    <property type="molecule type" value="Genomic_DNA"/>
</dbReference>
<dbReference type="RefSeq" id="WP_001114005.1">
    <property type="nucleotide sequence ID" value="NC_011601.1"/>
</dbReference>
<dbReference type="SMR" id="B7ULJ5"/>
<dbReference type="KEGG" id="ecg:E2348C_0597"/>
<dbReference type="HOGENOM" id="CLU_038423_2_2_6"/>
<dbReference type="Proteomes" id="UP000008205">
    <property type="component" value="Chromosome"/>
</dbReference>
<dbReference type="GO" id="GO:0140078">
    <property type="term" value="F:class I DNA-(apurinic or apyrimidinic site) endonuclease activity"/>
    <property type="evidence" value="ECO:0007669"/>
    <property type="project" value="UniProtKB-EC"/>
</dbReference>
<dbReference type="GO" id="GO:0003684">
    <property type="term" value="F:damaged DNA binding"/>
    <property type="evidence" value="ECO:0007669"/>
    <property type="project" value="InterPro"/>
</dbReference>
<dbReference type="GO" id="GO:0000703">
    <property type="term" value="F:oxidized pyrimidine nucleobase lesion DNA N-glycosylase activity"/>
    <property type="evidence" value="ECO:0007669"/>
    <property type="project" value="UniProtKB-UniRule"/>
</dbReference>
<dbReference type="GO" id="GO:0008270">
    <property type="term" value="F:zinc ion binding"/>
    <property type="evidence" value="ECO:0007669"/>
    <property type="project" value="UniProtKB-UniRule"/>
</dbReference>
<dbReference type="GO" id="GO:0006284">
    <property type="term" value="P:base-excision repair"/>
    <property type="evidence" value="ECO:0007669"/>
    <property type="project" value="InterPro"/>
</dbReference>
<dbReference type="CDD" id="cd08965">
    <property type="entry name" value="EcNei-like_N"/>
    <property type="match status" value="1"/>
</dbReference>
<dbReference type="FunFam" id="1.10.8.50:FF:000005">
    <property type="entry name" value="Endonuclease 8"/>
    <property type="match status" value="1"/>
</dbReference>
<dbReference type="FunFam" id="3.20.190.10:FF:000002">
    <property type="entry name" value="Endonuclease 8"/>
    <property type="match status" value="1"/>
</dbReference>
<dbReference type="Gene3D" id="1.10.8.50">
    <property type="match status" value="1"/>
</dbReference>
<dbReference type="Gene3D" id="3.20.190.10">
    <property type="entry name" value="MutM-like, N-terminal"/>
    <property type="match status" value="1"/>
</dbReference>
<dbReference type="HAMAP" id="MF_01253">
    <property type="entry name" value="Endonuclease_8"/>
    <property type="match status" value="1"/>
</dbReference>
<dbReference type="InterPro" id="IPR015886">
    <property type="entry name" value="DNA_glyclase/AP_lyase_DNA-bd"/>
</dbReference>
<dbReference type="InterPro" id="IPR015887">
    <property type="entry name" value="DNA_glyclase_Znf_dom_DNA_BS"/>
</dbReference>
<dbReference type="InterPro" id="IPR044091">
    <property type="entry name" value="EcNei-like_N"/>
</dbReference>
<dbReference type="InterPro" id="IPR023713">
    <property type="entry name" value="Endonuclease-VIII"/>
</dbReference>
<dbReference type="InterPro" id="IPR012319">
    <property type="entry name" value="FPG_cat"/>
</dbReference>
<dbReference type="InterPro" id="IPR035937">
    <property type="entry name" value="MutM-like_N-ter"/>
</dbReference>
<dbReference type="InterPro" id="IPR010979">
    <property type="entry name" value="Ribosomal_uS13-like_H2TH"/>
</dbReference>
<dbReference type="InterPro" id="IPR000214">
    <property type="entry name" value="Znf_DNA_glyclase/AP_lyase"/>
</dbReference>
<dbReference type="InterPro" id="IPR010663">
    <property type="entry name" value="Znf_FPG/IleRS"/>
</dbReference>
<dbReference type="NCBIfam" id="NF007763">
    <property type="entry name" value="PRK10445.1"/>
    <property type="match status" value="1"/>
</dbReference>
<dbReference type="PANTHER" id="PTHR42697">
    <property type="entry name" value="ENDONUCLEASE 8"/>
    <property type="match status" value="1"/>
</dbReference>
<dbReference type="PANTHER" id="PTHR42697:SF1">
    <property type="entry name" value="ENDONUCLEASE 8"/>
    <property type="match status" value="1"/>
</dbReference>
<dbReference type="Pfam" id="PF01149">
    <property type="entry name" value="Fapy_DNA_glyco"/>
    <property type="match status" value="1"/>
</dbReference>
<dbReference type="Pfam" id="PF06831">
    <property type="entry name" value="H2TH"/>
    <property type="match status" value="1"/>
</dbReference>
<dbReference type="Pfam" id="PF06827">
    <property type="entry name" value="zf-FPG_IleRS"/>
    <property type="match status" value="1"/>
</dbReference>
<dbReference type="SMART" id="SM00898">
    <property type="entry name" value="Fapy_DNA_glyco"/>
    <property type="match status" value="1"/>
</dbReference>
<dbReference type="SMART" id="SM01232">
    <property type="entry name" value="H2TH"/>
    <property type="match status" value="1"/>
</dbReference>
<dbReference type="SUPFAM" id="SSF57716">
    <property type="entry name" value="Glucocorticoid receptor-like (DNA-binding domain)"/>
    <property type="match status" value="1"/>
</dbReference>
<dbReference type="SUPFAM" id="SSF81624">
    <property type="entry name" value="N-terminal domain of MutM-like DNA repair proteins"/>
    <property type="match status" value="1"/>
</dbReference>
<dbReference type="SUPFAM" id="SSF46946">
    <property type="entry name" value="S13-like H2TH domain"/>
    <property type="match status" value="1"/>
</dbReference>
<dbReference type="PROSITE" id="PS51068">
    <property type="entry name" value="FPG_CAT"/>
    <property type="match status" value="1"/>
</dbReference>
<dbReference type="PROSITE" id="PS01242">
    <property type="entry name" value="ZF_FPG_1"/>
    <property type="match status" value="1"/>
</dbReference>
<dbReference type="PROSITE" id="PS51066">
    <property type="entry name" value="ZF_FPG_2"/>
    <property type="match status" value="1"/>
</dbReference>
<proteinExistence type="inferred from homology"/>
<feature type="initiator methionine" description="Removed" evidence="1">
    <location>
        <position position="1"/>
    </location>
</feature>
<feature type="chain" id="PRO_1000165089" description="Endonuclease 8">
    <location>
        <begin position="2"/>
        <end position="263"/>
    </location>
</feature>
<feature type="zinc finger region" description="FPG-type" evidence="1">
    <location>
        <begin position="229"/>
        <end position="263"/>
    </location>
</feature>
<feature type="active site" description="Schiff-base intermediate with DNA" evidence="1">
    <location>
        <position position="2"/>
    </location>
</feature>
<feature type="active site" description="Proton donor" evidence="1">
    <location>
        <position position="3"/>
    </location>
</feature>
<feature type="active site" description="Proton donor; for beta-elimination activity" evidence="1">
    <location>
        <position position="53"/>
    </location>
</feature>
<feature type="active site" description="Proton donor; for delta-elimination activity" evidence="1">
    <location>
        <position position="253"/>
    </location>
</feature>
<feature type="binding site" evidence="1">
    <location>
        <position position="70"/>
    </location>
    <ligand>
        <name>DNA</name>
        <dbReference type="ChEBI" id="CHEBI:16991"/>
    </ligand>
</feature>
<feature type="binding site" evidence="1">
    <location>
        <position position="125"/>
    </location>
    <ligand>
        <name>DNA</name>
        <dbReference type="ChEBI" id="CHEBI:16991"/>
    </ligand>
</feature>
<feature type="binding site" evidence="1">
    <location>
        <position position="169"/>
    </location>
    <ligand>
        <name>DNA</name>
        <dbReference type="ChEBI" id="CHEBI:16991"/>
    </ligand>
</feature>
<organism>
    <name type="scientific">Escherichia coli O127:H6 (strain E2348/69 / EPEC)</name>
    <dbReference type="NCBI Taxonomy" id="574521"/>
    <lineage>
        <taxon>Bacteria</taxon>
        <taxon>Pseudomonadati</taxon>
        <taxon>Pseudomonadota</taxon>
        <taxon>Gammaproteobacteria</taxon>
        <taxon>Enterobacterales</taxon>
        <taxon>Enterobacteriaceae</taxon>
        <taxon>Escherichia</taxon>
    </lineage>
</organism>